<geneLocation type="chloroplast"/>
<gene>
    <name evidence="2" type="primary">accD</name>
    <name type="ordered locus">GuabCp030</name>
</gene>
<comment type="function">
    <text evidence="2">Component of the acetyl coenzyme A carboxylase (ACC) complex. Biotin carboxylase (BC) catalyzes the carboxylation of biotin on its carrier protein (BCCP) and then the CO(2) group is transferred by the transcarboxylase to acetyl-CoA to form malonyl-CoA.</text>
</comment>
<comment type="catalytic activity">
    <reaction evidence="2">
        <text>N(6)-carboxybiotinyl-L-lysyl-[protein] + acetyl-CoA = N(6)-biotinyl-L-lysyl-[protein] + malonyl-CoA</text>
        <dbReference type="Rhea" id="RHEA:54728"/>
        <dbReference type="Rhea" id="RHEA-COMP:10505"/>
        <dbReference type="Rhea" id="RHEA-COMP:10506"/>
        <dbReference type="ChEBI" id="CHEBI:57288"/>
        <dbReference type="ChEBI" id="CHEBI:57384"/>
        <dbReference type="ChEBI" id="CHEBI:83144"/>
        <dbReference type="ChEBI" id="CHEBI:83145"/>
        <dbReference type="EC" id="2.1.3.15"/>
    </reaction>
</comment>
<comment type="cofactor">
    <cofactor evidence="2">
        <name>Zn(2+)</name>
        <dbReference type="ChEBI" id="CHEBI:29105"/>
    </cofactor>
    <text evidence="2">Binds 1 zinc ion per subunit.</text>
</comment>
<comment type="pathway">
    <text evidence="2">Lipid metabolism; malonyl-CoA biosynthesis; malonyl-CoA from acetyl-CoA: step 1/1.</text>
</comment>
<comment type="subunit">
    <text evidence="1">Acetyl-CoA carboxylase is a heterohexamer composed of biotin carboxyl carrier protein, biotin carboxylase and 2 subunits each of ACCase subunit alpha and ACCase plastid-coded subunit beta (accD).</text>
</comment>
<comment type="subcellular location">
    <subcellularLocation>
        <location evidence="2">Plastid</location>
        <location evidence="2">Chloroplast stroma</location>
    </subcellularLocation>
</comment>
<comment type="similarity">
    <text evidence="2">Belongs to the AccD/PCCB family.</text>
</comment>
<proteinExistence type="inferred from homology"/>
<protein>
    <recommendedName>
        <fullName evidence="2">Acetyl-coenzyme A carboxylase carboxyl transferase subunit beta, chloroplastic</fullName>
        <shortName evidence="2">ACCase subunit beta</shortName>
        <shortName evidence="2">Acetyl-CoA carboxylase carboxyltransferase subunit beta</shortName>
        <ecNumber evidence="2">2.1.3.15</ecNumber>
    </recommendedName>
</protein>
<evidence type="ECO:0000250" key="1"/>
<evidence type="ECO:0000255" key="2">
    <source>
        <dbReference type="HAMAP-Rule" id="MF_01395"/>
    </source>
</evidence>
<evidence type="ECO:0000255" key="3">
    <source>
        <dbReference type="PROSITE-ProRule" id="PRU01136"/>
    </source>
</evidence>
<accession>B2LMK2</accession>
<reference key="1">
    <citation type="submission" date="2008-03" db="EMBL/GenBank/DDBJ databases">
        <title>Guizotia abyssinica chloroplast sequenced using Solexa.</title>
        <authorList>
            <person name="Kane N.C."/>
            <person name="Dempewolf H."/>
            <person name="Stewart M.L."/>
            <person name="Cronk Q."/>
            <person name="Rieseberrg L.H."/>
        </authorList>
    </citation>
    <scope>NUCLEOTIDE SEQUENCE [LARGE SCALE GENOMIC DNA]</scope>
    <source>
        <strain>cv. PI 508077</strain>
    </source>
</reference>
<dbReference type="EC" id="2.1.3.15" evidence="2"/>
<dbReference type="EMBL" id="EU549769">
    <property type="protein sequence ID" value="ACB86536.1"/>
    <property type="molecule type" value="Genomic_DNA"/>
</dbReference>
<dbReference type="RefSeq" id="YP_001837369.1">
    <property type="nucleotide sequence ID" value="NC_010601.1"/>
</dbReference>
<dbReference type="SMR" id="B2LMK2"/>
<dbReference type="GeneID" id="6219076"/>
<dbReference type="UniPathway" id="UPA00655">
    <property type="reaction ID" value="UER00711"/>
</dbReference>
<dbReference type="GO" id="GO:0009317">
    <property type="term" value="C:acetyl-CoA carboxylase complex"/>
    <property type="evidence" value="ECO:0007669"/>
    <property type="project" value="InterPro"/>
</dbReference>
<dbReference type="GO" id="GO:0009570">
    <property type="term" value="C:chloroplast stroma"/>
    <property type="evidence" value="ECO:0007669"/>
    <property type="project" value="UniProtKB-SubCell"/>
</dbReference>
<dbReference type="GO" id="GO:0003989">
    <property type="term" value="F:acetyl-CoA carboxylase activity"/>
    <property type="evidence" value="ECO:0007669"/>
    <property type="project" value="InterPro"/>
</dbReference>
<dbReference type="GO" id="GO:0005524">
    <property type="term" value="F:ATP binding"/>
    <property type="evidence" value="ECO:0007669"/>
    <property type="project" value="UniProtKB-KW"/>
</dbReference>
<dbReference type="GO" id="GO:0016743">
    <property type="term" value="F:carboxyl- or carbamoyltransferase activity"/>
    <property type="evidence" value="ECO:0007669"/>
    <property type="project" value="UniProtKB-UniRule"/>
</dbReference>
<dbReference type="GO" id="GO:0008270">
    <property type="term" value="F:zinc ion binding"/>
    <property type="evidence" value="ECO:0007669"/>
    <property type="project" value="UniProtKB-UniRule"/>
</dbReference>
<dbReference type="GO" id="GO:0006633">
    <property type="term" value="P:fatty acid biosynthetic process"/>
    <property type="evidence" value="ECO:0007669"/>
    <property type="project" value="UniProtKB-KW"/>
</dbReference>
<dbReference type="GO" id="GO:2001295">
    <property type="term" value="P:malonyl-CoA biosynthetic process"/>
    <property type="evidence" value="ECO:0007669"/>
    <property type="project" value="UniProtKB-UniRule"/>
</dbReference>
<dbReference type="Gene3D" id="3.90.226.10">
    <property type="entry name" value="2-enoyl-CoA Hydratase, Chain A, domain 1"/>
    <property type="match status" value="1"/>
</dbReference>
<dbReference type="HAMAP" id="MF_01395">
    <property type="entry name" value="AcetylCoA_CT_beta"/>
    <property type="match status" value="1"/>
</dbReference>
<dbReference type="InterPro" id="IPR034733">
    <property type="entry name" value="AcCoA_carboxyl_beta"/>
</dbReference>
<dbReference type="InterPro" id="IPR000438">
    <property type="entry name" value="Acetyl_CoA_COase_Trfase_b_su"/>
</dbReference>
<dbReference type="InterPro" id="IPR029045">
    <property type="entry name" value="ClpP/crotonase-like_dom_sf"/>
</dbReference>
<dbReference type="InterPro" id="IPR011762">
    <property type="entry name" value="COA_CT_N"/>
</dbReference>
<dbReference type="NCBIfam" id="TIGR00515">
    <property type="entry name" value="accD"/>
    <property type="match status" value="1"/>
</dbReference>
<dbReference type="PANTHER" id="PTHR42995">
    <property type="entry name" value="ACETYL-COENZYME A CARBOXYLASE CARBOXYL TRANSFERASE SUBUNIT BETA, CHLOROPLASTIC"/>
    <property type="match status" value="1"/>
</dbReference>
<dbReference type="PANTHER" id="PTHR42995:SF5">
    <property type="entry name" value="ACETYL-COENZYME A CARBOXYLASE CARBOXYL TRANSFERASE SUBUNIT BETA, CHLOROPLASTIC"/>
    <property type="match status" value="1"/>
</dbReference>
<dbReference type="Pfam" id="PF01039">
    <property type="entry name" value="Carboxyl_trans"/>
    <property type="match status" value="1"/>
</dbReference>
<dbReference type="PRINTS" id="PR01070">
    <property type="entry name" value="ACCCTRFRASEB"/>
</dbReference>
<dbReference type="SUPFAM" id="SSF52096">
    <property type="entry name" value="ClpP/crotonase"/>
    <property type="match status" value="1"/>
</dbReference>
<dbReference type="PROSITE" id="PS50980">
    <property type="entry name" value="COA_CT_NTER"/>
    <property type="match status" value="1"/>
</dbReference>
<sequence>MKRWWFNSMLFKKEFEHRCRLSKSTSSLGPIENAIESKDPNINDTDKNIQSWGGHDNYSNVDLFFGVKDIRNFISDDTFLVKDSNGDIYSIYFDIENHIFEIDNDHSFCSELESSFYRNSSYLNNGSKSKNPQHDPYMNDTQYTWNNHINSCIDSYLQSQICIDSYIVSGSDNSSNNYISSSICCESGNSSKNADARTSDQIIRESSTDLDVTQKYRHLWVQCENCYGLNYKKFFKSKMNLCEQCGYHLKMSSSDRIELSIDPGTWEPMDEDMVSLDPIEFHSEEEPYKNRIDSYQRKTGLTEAVQTGIGQLDGINVAIAVMDFQFMGGSMGSVVGEKITRLIEYATKEFLPLIIVCASGGARMQEGSLSLMQMAKISSALYDYQSNKKLFYVPILTSPTTGGVTASFGMLGDIIIAEPNAYIAFAGKRVIEQTLNKTVPDGSQAAEYLFQKGLFDLIVPRNPLKSVLSELFQLHTFFPLNQN</sequence>
<organism>
    <name type="scientific">Guizotia abyssinica</name>
    <name type="common">Niger</name>
    <name type="synonym">Ramtilla</name>
    <dbReference type="NCBI Taxonomy" id="4230"/>
    <lineage>
        <taxon>Eukaryota</taxon>
        <taxon>Viridiplantae</taxon>
        <taxon>Streptophyta</taxon>
        <taxon>Embryophyta</taxon>
        <taxon>Tracheophyta</taxon>
        <taxon>Spermatophyta</taxon>
        <taxon>Magnoliopsida</taxon>
        <taxon>eudicotyledons</taxon>
        <taxon>Gunneridae</taxon>
        <taxon>Pentapetalae</taxon>
        <taxon>asterids</taxon>
        <taxon>campanulids</taxon>
        <taxon>Asterales</taxon>
        <taxon>Asteraceae</taxon>
        <taxon>Asteroideae</taxon>
        <taxon>Heliantheae alliance</taxon>
        <taxon>Millerieae</taxon>
        <taxon>Guizotia</taxon>
    </lineage>
</organism>
<feature type="chain" id="PRO_0000359142" description="Acetyl-coenzyme A carboxylase carboxyl transferase subunit beta, chloroplastic">
    <location>
        <begin position="1"/>
        <end position="483"/>
    </location>
</feature>
<feature type="domain" description="CoA carboxyltransferase N-terminal" evidence="3">
    <location>
        <begin position="219"/>
        <end position="483"/>
    </location>
</feature>
<feature type="zinc finger region" description="C4-type" evidence="2">
    <location>
        <begin position="223"/>
        <end position="245"/>
    </location>
</feature>
<feature type="binding site" evidence="2">
    <location>
        <position position="223"/>
    </location>
    <ligand>
        <name>Zn(2+)</name>
        <dbReference type="ChEBI" id="CHEBI:29105"/>
    </ligand>
</feature>
<feature type="binding site" evidence="2">
    <location>
        <position position="226"/>
    </location>
    <ligand>
        <name>Zn(2+)</name>
        <dbReference type="ChEBI" id="CHEBI:29105"/>
    </ligand>
</feature>
<feature type="binding site" evidence="2">
    <location>
        <position position="242"/>
    </location>
    <ligand>
        <name>Zn(2+)</name>
        <dbReference type="ChEBI" id="CHEBI:29105"/>
    </ligand>
</feature>
<feature type="binding site" evidence="2">
    <location>
        <position position="245"/>
    </location>
    <ligand>
        <name>Zn(2+)</name>
        <dbReference type="ChEBI" id="CHEBI:29105"/>
    </ligand>
</feature>
<keyword id="KW-0067">ATP-binding</keyword>
<keyword id="KW-0150">Chloroplast</keyword>
<keyword id="KW-0275">Fatty acid biosynthesis</keyword>
<keyword id="KW-0276">Fatty acid metabolism</keyword>
<keyword id="KW-0444">Lipid biosynthesis</keyword>
<keyword id="KW-0443">Lipid metabolism</keyword>
<keyword id="KW-0479">Metal-binding</keyword>
<keyword id="KW-0547">Nucleotide-binding</keyword>
<keyword id="KW-0934">Plastid</keyword>
<keyword id="KW-0808">Transferase</keyword>
<keyword id="KW-0862">Zinc</keyword>
<keyword id="KW-0863">Zinc-finger</keyword>
<name>ACCD_GUIAB</name>